<keyword id="KW-0378">Hydrolase</keyword>
<keyword id="KW-0546">Nucleotide metabolism</keyword>
<keyword id="KW-0547">Nucleotide-binding</keyword>
<proteinExistence type="inferred from homology"/>
<organism>
    <name type="scientific">Cupriavidus taiwanensis (strain DSM 17343 / BCRC 17206 / CCUG 44338 / CIP 107171 / LMG 19424 / R1)</name>
    <name type="common">Ralstonia taiwanensis (strain LMG 19424)</name>
    <dbReference type="NCBI Taxonomy" id="977880"/>
    <lineage>
        <taxon>Bacteria</taxon>
        <taxon>Pseudomonadati</taxon>
        <taxon>Pseudomonadota</taxon>
        <taxon>Betaproteobacteria</taxon>
        <taxon>Burkholderiales</taxon>
        <taxon>Burkholderiaceae</taxon>
        <taxon>Cupriavidus</taxon>
    </lineage>
</organism>
<feature type="chain" id="PRO_1000096420" description="dCTP deaminase">
    <location>
        <begin position="1"/>
        <end position="188"/>
    </location>
</feature>
<feature type="active site" description="Proton donor/acceptor" evidence="1">
    <location>
        <position position="137"/>
    </location>
</feature>
<feature type="binding site" evidence="1">
    <location>
        <begin position="111"/>
        <end position="116"/>
    </location>
    <ligand>
        <name>dCTP</name>
        <dbReference type="ChEBI" id="CHEBI:61481"/>
    </ligand>
</feature>
<feature type="binding site" evidence="1">
    <location>
        <begin position="135"/>
        <end position="137"/>
    </location>
    <ligand>
        <name>dCTP</name>
        <dbReference type="ChEBI" id="CHEBI:61481"/>
    </ligand>
</feature>
<feature type="binding site" evidence="1">
    <location>
        <position position="156"/>
    </location>
    <ligand>
        <name>dCTP</name>
        <dbReference type="ChEBI" id="CHEBI:61481"/>
    </ligand>
</feature>
<feature type="binding site" evidence="1">
    <location>
        <position position="170"/>
    </location>
    <ligand>
        <name>dCTP</name>
        <dbReference type="ChEBI" id="CHEBI:61481"/>
    </ligand>
</feature>
<feature type="binding site" evidence="1">
    <location>
        <position position="180"/>
    </location>
    <ligand>
        <name>dCTP</name>
        <dbReference type="ChEBI" id="CHEBI:61481"/>
    </ligand>
</feature>
<comment type="function">
    <text evidence="1">Catalyzes the deamination of dCTP to dUTP.</text>
</comment>
<comment type="catalytic activity">
    <reaction evidence="1">
        <text>dCTP + H2O + H(+) = dUTP + NH4(+)</text>
        <dbReference type="Rhea" id="RHEA:22680"/>
        <dbReference type="ChEBI" id="CHEBI:15377"/>
        <dbReference type="ChEBI" id="CHEBI:15378"/>
        <dbReference type="ChEBI" id="CHEBI:28938"/>
        <dbReference type="ChEBI" id="CHEBI:61481"/>
        <dbReference type="ChEBI" id="CHEBI:61555"/>
        <dbReference type="EC" id="3.5.4.13"/>
    </reaction>
</comment>
<comment type="pathway">
    <text evidence="1">Pyrimidine metabolism; dUMP biosynthesis; dUMP from dCTP (dUTP route): step 1/2.</text>
</comment>
<comment type="subunit">
    <text evidence="1">Homotrimer.</text>
</comment>
<comment type="similarity">
    <text evidence="1">Belongs to the dCTP deaminase family.</text>
</comment>
<dbReference type="EC" id="3.5.4.13" evidence="1"/>
<dbReference type="EMBL" id="CU633749">
    <property type="protein sequence ID" value="CAQ70347.1"/>
    <property type="molecule type" value="Genomic_DNA"/>
</dbReference>
<dbReference type="RefSeq" id="WP_012353647.1">
    <property type="nucleotide sequence ID" value="NC_010528.1"/>
</dbReference>
<dbReference type="SMR" id="B3R622"/>
<dbReference type="GeneID" id="29761788"/>
<dbReference type="KEGG" id="cti:RALTA_A2413"/>
<dbReference type="eggNOG" id="COG0717">
    <property type="taxonomic scope" value="Bacteria"/>
</dbReference>
<dbReference type="HOGENOM" id="CLU_087476_4_0_4"/>
<dbReference type="BioCyc" id="CTAI977880:RALTA_RS11730-MONOMER"/>
<dbReference type="UniPathway" id="UPA00610">
    <property type="reaction ID" value="UER00665"/>
</dbReference>
<dbReference type="Proteomes" id="UP000001692">
    <property type="component" value="Chromosome 1"/>
</dbReference>
<dbReference type="GO" id="GO:0008829">
    <property type="term" value="F:dCTP deaminase activity"/>
    <property type="evidence" value="ECO:0007669"/>
    <property type="project" value="UniProtKB-UniRule"/>
</dbReference>
<dbReference type="GO" id="GO:0000166">
    <property type="term" value="F:nucleotide binding"/>
    <property type="evidence" value="ECO:0007669"/>
    <property type="project" value="UniProtKB-KW"/>
</dbReference>
<dbReference type="GO" id="GO:0006226">
    <property type="term" value="P:dUMP biosynthetic process"/>
    <property type="evidence" value="ECO:0007669"/>
    <property type="project" value="UniProtKB-UniPathway"/>
</dbReference>
<dbReference type="GO" id="GO:0006229">
    <property type="term" value="P:dUTP biosynthetic process"/>
    <property type="evidence" value="ECO:0007669"/>
    <property type="project" value="UniProtKB-UniRule"/>
</dbReference>
<dbReference type="GO" id="GO:0015949">
    <property type="term" value="P:nucleobase-containing small molecule interconversion"/>
    <property type="evidence" value="ECO:0007669"/>
    <property type="project" value="TreeGrafter"/>
</dbReference>
<dbReference type="CDD" id="cd07557">
    <property type="entry name" value="trimeric_dUTPase"/>
    <property type="match status" value="1"/>
</dbReference>
<dbReference type="FunFam" id="2.70.40.10:FF:000001">
    <property type="entry name" value="dCTP deaminase"/>
    <property type="match status" value="1"/>
</dbReference>
<dbReference type="Gene3D" id="2.70.40.10">
    <property type="match status" value="1"/>
</dbReference>
<dbReference type="HAMAP" id="MF_00146">
    <property type="entry name" value="dCTP_deaminase"/>
    <property type="match status" value="1"/>
</dbReference>
<dbReference type="InterPro" id="IPR011962">
    <property type="entry name" value="dCTP_deaminase"/>
</dbReference>
<dbReference type="InterPro" id="IPR036157">
    <property type="entry name" value="dUTPase-like_sf"/>
</dbReference>
<dbReference type="InterPro" id="IPR033704">
    <property type="entry name" value="dUTPase_trimeric"/>
</dbReference>
<dbReference type="NCBIfam" id="TIGR02274">
    <property type="entry name" value="dCTP_deam"/>
    <property type="match status" value="1"/>
</dbReference>
<dbReference type="PANTHER" id="PTHR42680">
    <property type="entry name" value="DCTP DEAMINASE"/>
    <property type="match status" value="1"/>
</dbReference>
<dbReference type="PANTHER" id="PTHR42680:SF3">
    <property type="entry name" value="DCTP DEAMINASE"/>
    <property type="match status" value="1"/>
</dbReference>
<dbReference type="Pfam" id="PF22769">
    <property type="entry name" value="DCD"/>
    <property type="match status" value="1"/>
</dbReference>
<dbReference type="SUPFAM" id="SSF51283">
    <property type="entry name" value="dUTPase-like"/>
    <property type="match status" value="1"/>
</dbReference>
<gene>
    <name evidence="1" type="primary">dcd</name>
    <name type="ordered locus">RALTA_A2413</name>
</gene>
<protein>
    <recommendedName>
        <fullName evidence="1">dCTP deaminase</fullName>
        <ecNumber evidence="1">3.5.4.13</ecNumber>
    </recommendedName>
    <alternativeName>
        <fullName evidence="1">Deoxycytidine triphosphate deaminase</fullName>
    </alternativeName>
</protein>
<accession>B3R622</accession>
<sequence length="188" mass="21202">MSIKSDKWIRRMAEQHGMIEPFEPGQVREADGRKIVSYGTSSYGYDIRCADEFKIFTNINSTIVDPKNFDEKSFVDFKGDVCIIPPNSFALARTMEYFRIPRSVLTICLGKSTYARCGIIVNVTPFEPEWEGYVTLEFSNTTPLPAKIYAGEGCAQVLFFESDEICETSYADRGGKYQGQHGVTLPKT</sequence>
<reference key="1">
    <citation type="journal article" date="2008" name="Genome Res.">
        <title>Genome sequence of the beta-rhizobium Cupriavidus taiwanensis and comparative genomics of rhizobia.</title>
        <authorList>
            <person name="Amadou C."/>
            <person name="Pascal G."/>
            <person name="Mangenot S."/>
            <person name="Glew M."/>
            <person name="Bontemps C."/>
            <person name="Capela D."/>
            <person name="Carrere S."/>
            <person name="Cruveiller S."/>
            <person name="Dossat C."/>
            <person name="Lajus A."/>
            <person name="Marchetti M."/>
            <person name="Poinsot V."/>
            <person name="Rouy Z."/>
            <person name="Servin B."/>
            <person name="Saad M."/>
            <person name="Schenowitz C."/>
            <person name="Barbe V."/>
            <person name="Batut J."/>
            <person name="Medigue C."/>
            <person name="Masson-Boivin C."/>
        </authorList>
    </citation>
    <scope>NUCLEOTIDE SEQUENCE [LARGE SCALE GENOMIC DNA]</scope>
    <source>
        <strain>DSM 17343 / BCRC 17206 / CCUG 44338 / CIP 107171 / LMG 19424 / R1</strain>
    </source>
</reference>
<evidence type="ECO:0000255" key="1">
    <source>
        <dbReference type="HAMAP-Rule" id="MF_00146"/>
    </source>
</evidence>
<name>DCD_CUPTR</name>